<feature type="chain" id="PRO_0000189966" description="Phosphate acyltransferase">
    <location>
        <begin position="1"/>
        <end position="341"/>
    </location>
</feature>
<keyword id="KW-0963">Cytoplasm</keyword>
<keyword id="KW-0444">Lipid biosynthesis</keyword>
<keyword id="KW-0443">Lipid metabolism</keyword>
<keyword id="KW-0594">Phospholipid biosynthesis</keyword>
<keyword id="KW-1208">Phospholipid metabolism</keyword>
<keyword id="KW-0808">Transferase</keyword>
<gene>
    <name evidence="1" type="primary">plsX</name>
    <name type="ordered locus">VV1272</name>
</gene>
<proteinExistence type="inferred from homology"/>
<reference key="1">
    <citation type="journal article" date="2003" name="Genome Res.">
        <title>Comparative genome analysis of Vibrio vulnificus, a marine pathogen.</title>
        <authorList>
            <person name="Chen C.-Y."/>
            <person name="Wu K.-M."/>
            <person name="Chang Y.-C."/>
            <person name="Chang C.-H."/>
            <person name="Tsai H.-C."/>
            <person name="Liao T.-L."/>
            <person name="Liu Y.-M."/>
            <person name="Chen H.-J."/>
            <person name="Shen A.B.-T."/>
            <person name="Li J.-C."/>
            <person name="Su T.-L."/>
            <person name="Shao C.-P."/>
            <person name="Lee C.-T."/>
            <person name="Hor L.-I."/>
            <person name="Tsai S.-F."/>
        </authorList>
    </citation>
    <scope>NUCLEOTIDE SEQUENCE [LARGE SCALE GENOMIC DNA]</scope>
    <source>
        <strain>YJ016</strain>
    </source>
</reference>
<evidence type="ECO:0000255" key="1">
    <source>
        <dbReference type="HAMAP-Rule" id="MF_00019"/>
    </source>
</evidence>
<evidence type="ECO:0000305" key="2"/>
<sequence length="341" mass="36535">MQSITVALDAMGGDFGPRVTVPAAVQALSHFPELKVILTGDQQQITSQLSLLGYKPDARLSVQHCDRMISNSEKPSLALRNSQGSSMRHAIELVADSTADACVSGGNTGALMALSRFILKLLPGIDRPALISALPTVTGGRSWMLDLGANVSCDADTLFQFAVMGSALAEEHLNRAPRVAVLNVGEEETKGNDLVKRCAELLSQTQAVHFVGYIEGNQILKNAADVIVCDGFVGNVCLKASEGTAQLFIEKIKTSMMASSIKGWIARILFSELFNELKTLNPDQYNGASLLGLRGIVIKSHGSADVSALVNAIGEAVHEVKRQVPSRISDRLEAVLLERHY</sequence>
<name>PLSX_VIBVY</name>
<protein>
    <recommendedName>
        <fullName evidence="1">Phosphate acyltransferase</fullName>
        <ecNumber evidence="1">2.3.1.274</ecNumber>
    </recommendedName>
    <alternativeName>
        <fullName evidence="1">Acyl-ACP phosphotransacylase</fullName>
    </alternativeName>
    <alternativeName>
        <fullName evidence="1">Acyl-[acyl-carrier-protein]--phosphate acyltransferase</fullName>
    </alternativeName>
    <alternativeName>
        <fullName evidence="1">Phosphate-acyl-ACP acyltransferase</fullName>
    </alternativeName>
</protein>
<organism>
    <name type="scientific">Vibrio vulnificus (strain YJ016)</name>
    <dbReference type="NCBI Taxonomy" id="196600"/>
    <lineage>
        <taxon>Bacteria</taxon>
        <taxon>Pseudomonadati</taxon>
        <taxon>Pseudomonadota</taxon>
        <taxon>Gammaproteobacteria</taxon>
        <taxon>Vibrionales</taxon>
        <taxon>Vibrionaceae</taxon>
        <taxon>Vibrio</taxon>
    </lineage>
</organism>
<dbReference type="EC" id="2.3.1.274" evidence="1"/>
<dbReference type="EMBL" id="BA000037">
    <property type="protein sequence ID" value="BAC94036.1"/>
    <property type="status" value="ALT_INIT"/>
    <property type="molecule type" value="Genomic_DNA"/>
</dbReference>
<dbReference type="RefSeq" id="WP_011080822.1">
    <property type="nucleotide sequence ID" value="NC_005139.1"/>
</dbReference>
<dbReference type="SMR" id="Q7MM01"/>
<dbReference type="STRING" id="672.VV93_v1c11890"/>
<dbReference type="GeneID" id="93894222"/>
<dbReference type="KEGG" id="vvy:VV1272"/>
<dbReference type="eggNOG" id="COG0416">
    <property type="taxonomic scope" value="Bacteria"/>
</dbReference>
<dbReference type="HOGENOM" id="CLU_039379_1_0_6"/>
<dbReference type="UniPathway" id="UPA00085"/>
<dbReference type="Proteomes" id="UP000002675">
    <property type="component" value="Chromosome I"/>
</dbReference>
<dbReference type="GO" id="GO:0005737">
    <property type="term" value="C:cytoplasm"/>
    <property type="evidence" value="ECO:0007669"/>
    <property type="project" value="UniProtKB-SubCell"/>
</dbReference>
<dbReference type="GO" id="GO:0043811">
    <property type="term" value="F:phosphate:acyl-[acyl carrier protein] acyltransferase activity"/>
    <property type="evidence" value="ECO:0007669"/>
    <property type="project" value="UniProtKB-UniRule"/>
</dbReference>
<dbReference type="GO" id="GO:0006633">
    <property type="term" value="P:fatty acid biosynthetic process"/>
    <property type="evidence" value="ECO:0007669"/>
    <property type="project" value="UniProtKB-UniRule"/>
</dbReference>
<dbReference type="GO" id="GO:0008654">
    <property type="term" value="P:phospholipid biosynthetic process"/>
    <property type="evidence" value="ECO:0007669"/>
    <property type="project" value="UniProtKB-KW"/>
</dbReference>
<dbReference type="Gene3D" id="3.40.718.10">
    <property type="entry name" value="Isopropylmalate Dehydrogenase"/>
    <property type="match status" value="1"/>
</dbReference>
<dbReference type="HAMAP" id="MF_00019">
    <property type="entry name" value="PlsX"/>
    <property type="match status" value="1"/>
</dbReference>
<dbReference type="InterPro" id="IPR003664">
    <property type="entry name" value="FA_synthesis"/>
</dbReference>
<dbReference type="InterPro" id="IPR012281">
    <property type="entry name" value="Phospholipid_synth_PlsX-like"/>
</dbReference>
<dbReference type="NCBIfam" id="TIGR00182">
    <property type="entry name" value="plsX"/>
    <property type="match status" value="1"/>
</dbReference>
<dbReference type="PANTHER" id="PTHR30100">
    <property type="entry name" value="FATTY ACID/PHOSPHOLIPID SYNTHESIS PROTEIN PLSX"/>
    <property type="match status" value="1"/>
</dbReference>
<dbReference type="PANTHER" id="PTHR30100:SF1">
    <property type="entry name" value="PHOSPHATE ACYLTRANSFERASE"/>
    <property type="match status" value="1"/>
</dbReference>
<dbReference type="Pfam" id="PF02504">
    <property type="entry name" value="FA_synthesis"/>
    <property type="match status" value="1"/>
</dbReference>
<dbReference type="PIRSF" id="PIRSF002465">
    <property type="entry name" value="Phsphlp_syn_PlsX"/>
    <property type="match status" value="1"/>
</dbReference>
<dbReference type="SUPFAM" id="SSF53659">
    <property type="entry name" value="Isocitrate/Isopropylmalate dehydrogenase-like"/>
    <property type="match status" value="1"/>
</dbReference>
<accession>Q7MM01</accession>
<comment type="function">
    <text evidence="1">Catalyzes the reversible formation of acyl-phosphate (acyl-PO(4)) from acyl-[acyl-carrier-protein] (acyl-ACP). This enzyme utilizes acyl-ACP as fatty acyl donor, but not acyl-CoA.</text>
</comment>
<comment type="catalytic activity">
    <reaction evidence="1">
        <text>a fatty acyl-[ACP] + phosphate = an acyl phosphate + holo-[ACP]</text>
        <dbReference type="Rhea" id="RHEA:42292"/>
        <dbReference type="Rhea" id="RHEA-COMP:9685"/>
        <dbReference type="Rhea" id="RHEA-COMP:14125"/>
        <dbReference type="ChEBI" id="CHEBI:43474"/>
        <dbReference type="ChEBI" id="CHEBI:59918"/>
        <dbReference type="ChEBI" id="CHEBI:64479"/>
        <dbReference type="ChEBI" id="CHEBI:138651"/>
        <dbReference type="EC" id="2.3.1.274"/>
    </reaction>
</comment>
<comment type="pathway">
    <text evidence="1">Lipid metabolism; phospholipid metabolism.</text>
</comment>
<comment type="subunit">
    <text evidence="1">Homodimer. Probably interacts with PlsY.</text>
</comment>
<comment type="subcellular location">
    <subcellularLocation>
        <location evidence="1">Cytoplasm</location>
    </subcellularLocation>
    <text evidence="1">Associated with the membrane possibly through PlsY.</text>
</comment>
<comment type="similarity">
    <text evidence="1">Belongs to the PlsX family.</text>
</comment>
<comment type="sequence caution" evidence="2">
    <conflict type="erroneous initiation">
        <sequence resource="EMBL-CDS" id="BAC94036"/>
    </conflict>
</comment>